<organism>
    <name type="scientific">Homo sapiens</name>
    <name type="common">Human</name>
    <dbReference type="NCBI Taxonomy" id="9606"/>
    <lineage>
        <taxon>Eukaryota</taxon>
        <taxon>Metazoa</taxon>
        <taxon>Chordata</taxon>
        <taxon>Craniata</taxon>
        <taxon>Vertebrata</taxon>
        <taxon>Euteleostomi</taxon>
        <taxon>Mammalia</taxon>
        <taxon>Eutheria</taxon>
        <taxon>Euarchontoglires</taxon>
        <taxon>Primates</taxon>
        <taxon>Haplorrhini</taxon>
        <taxon>Catarrhini</taxon>
        <taxon>Hominidae</taxon>
        <taxon>Homo</taxon>
    </lineage>
</organism>
<gene>
    <name type="primary">SPRY1</name>
</gene>
<accession>O43609</accession>
<accession>D3DNX6</accession>
<accession>Q6PNE0</accession>
<reference key="1">
    <citation type="journal article" date="2003" name="Int. J. Mol. Med.">
        <title>Identification and expression analysis of a novel splice variant of human Sprouty1 gene.</title>
        <authorList>
            <person name="Wang L."/>
            <person name="Ji C."/>
            <person name="Wu H."/>
            <person name="Xu J."/>
            <person name="Wu Q."/>
            <person name="Dai J."/>
            <person name="Yin G."/>
            <person name="Ye X."/>
            <person name="Gu S."/>
            <person name="Xie Y."/>
            <person name="Mao Y."/>
        </authorList>
    </citation>
    <scope>NUCLEOTIDE SEQUENCE [MRNA]</scope>
</reference>
<reference key="2">
    <citation type="submission" date="2005-09" db="EMBL/GenBank/DDBJ databases">
        <authorList>
            <person name="Mural R.J."/>
            <person name="Istrail S."/>
            <person name="Sutton G.G."/>
            <person name="Florea L."/>
            <person name="Halpern A.L."/>
            <person name="Mobarry C.M."/>
            <person name="Lippert R."/>
            <person name="Walenz B."/>
            <person name="Shatkay H."/>
            <person name="Dew I."/>
            <person name="Miller J.R."/>
            <person name="Flanigan M.J."/>
            <person name="Edwards N.J."/>
            <person name="Bolanos R."/>
            <person name="Fasulo D."/>
            <person name="Halldorsson B.V."/>
            <person name="Hannenhalli S."/>
            <person name="Turner R."/>
            <person name="Yooseph S."/>
            <person name="Lu F."/>
            <person name="Nusskern D.R."/>
            <person name="Shue B.C."/>
            <person name="Zheng X.H."/>
            <person name="Zhong F."/>
            <person name="Delcher A.L."/>
            <person name="Huson D.H."/>
            <person name="Kravitz S.A."/>
            <person name="Mouchard L."/>
            <person name="Reinert K."/>
            <person name="Remington K.A."/>
            <person name="Clark A.G."/>
            <person name="Waterman M.S."/>
            <person name="Eichler E.E."/>
            <person name="Adams M.D."/>
            <person name="Hunkapiller M.W."/>
            <person name="Myers E.W."/>
            <person name="Venter J.C."/>
        </authorList>
    </citation>
    <scope>NUCLEOTIDE SEQUENCE [LARGE SCALE GENOMIC DNA]</scope>
</reference>
<reference key="3">
    <citation type="journal article" date="2004" name="Genome Res.">
        <title>The status, quality, and expansion of the NIH full-length cDNA project: the Mammalian Gene Collection (MGC).</title>
        <authorList>
            <consortium name="The MGC Project Team"/>
        </authorList>
    </citation>
    <scope>NUCLEOTIDE SEQUENCE [LARGE SCALE MRNA]</scope>
    <source>
        <tissue>PNS</tissue>
    </source>
</reference>
<reference key="4">
    <citation type="submission" date="2004-04" db="EMBL/GenBank/DDBJ databases">
        <authorList>
            <person name="Raya A."/>
            <person name="de la Luna S."/>
        </authorList>
    </citation>
    <scope>NUCLEOTIDE SEQUENCE [MRNA] OF 4-319</scope>
</reference>
<reference key="5">
    <citation type="journal article" date="1998" name="Cell">
        <title>Sprouty encodes a novel antagonist of FGF signaling that patterns apical branching of the Drosophila airways.</title>
        <authorList>
            <person name="Hacohen N."/>
            <person name="Kramer S."/>
            <person name="Sutherland D."/>
            <person name="Hiromi Y."/>
            <person name="Krasnow M.A."/>
        </authorList>
    </citation>
    <scope>NUCLEOTIDE SEQUENCE [MRNA] OF 181-319</scope>
</reference>
<reference key="6">
    <citation type="journal article" date="2012" name="Mol. Cell. Proteomics">
        <title>Comparative large-scale characterisation of plant vs. mammal proteins reveals similar and idiosyncratic N-alpha acetylation features.</title>
        <authorList>
            <person name="Bienvenut W.V."/>
            <person name="Sumpton D."/>
            <person name="Martinez A."/>
            <person name="Lilla S."/>
            <person name="Espagne C."/>
            <person name="Meinnel T."/>
            <person name="Giglione C."/>
        </authorList>
    </citation>
    <scope>ACETYLATION [LARGE SCALE ANALYSIS] AT MET-1</scope>
    <scope>IDENTIFICATION BY MASS SPECTROMETRY [LARGE SCALE ANALYSIS]</scope>
</reference>
<protein>
    <recommendedName>
        <fullName>Protein sprouty homolog 1</fullName>
        <shortName>Spry-1</shortName>
    </recommendedName>
</protein>
<evidence type="ECO:0000250" key="1">
    <source>
        <dbReference type="UniProtKB" id="Q9QXV9"/>
    </source>
</evidence>
<evidence type="ECO:0000255" key="2">
    <source>
        <dbReference type="PROSITE-ProRule" id="PRU00572"/>
    </source>
</evidence>
<evidence type="ECO:0000256" key="3">
    <source>
        <dbReference type="SAM" id="MobiDB-lite"/>
    </source>
</evidence>
<evidence type="ECO:0000305" key="4"/>
<evidence type="ECO:0007744" key="5">
    <source>
    </source>
</evidence>
<comment type="function">
    <text evidence="1">Inhibits fibroblast growth factor (FGF)-induced retinal lens fiber differentiation, probably by inhibiting FGF-mediated phosphorylation of ERK1/2 (By similarity). Inhibits TGFB-induced epithelial-to-mesenchymal transition in lens epithelial cells (By similarity).</text>
</comment>
<comment type="subunit">
    <text evidence="1">Forms heterodimers with SPRY2 (By similarity). Interacts with TESK1 (By similarity). Interacts with CAV1 (via C-terminus) (By similarity).</text>
</comment>
<comment type="interaction">
    <interactant intactId="EBI-3866665">
        <id>O43609</id>
    </interactant>
    <interactant intactId="EBI-12006944">
        <id>O43184-4</id>
        <label>ADAM12</label>
    </interactant>
    <organismsDiffer>false</organismsDiffer>
    <experiments>4</experiments>
</comment>
<comment type="interaction">
    <interactant intactId="EBI-3866665">
        <id>O43609</id>
    </interactant>
    <interactant intactId="EBI-10173507">
        <id>Q6UY14-3</id>
        <label>ADAMTSL4</label>
    </interactant>
    <organismsDiffer>false</organismsDiffer>
    <experiments>3</experiments>
</comment>
<comment type="interaction">
    <interactant intactId="EBI-3866665">
        <id>O43609</id>
    </interactant>
    <interactant intactId="EBI-17183751">
        <id>X5D778</id>
        <label>ANKRD11</label>
    </interactant>
    <organismsDiffer>false</organismsDiffer>
    <experiments>3</experiments>
</comment>
<comment type="interaction">
    <interactant intactId="EBI-3866665">
        <id>O43609</id>
    </interactant>
    <interactant intactId="EBI-10961624">
        <id>Q2TAC2-2</id>
        <label>CCDC57</label>
    </interactant>
    <organismsDiffer>false</organismsDiffer>
    <experiments>3</experiments>
</comment>
<comment type="interaction">
    <interactant intactId="EBI-3866665">
        <id>O43609</id>
    </interactant>
    <interactant intactId="EBI-11063830">
        <id>Q86X02</id>
        <label>CDR2L</label>
    </interactant>
    <organismsDiffer>false</organismsDiffer>
    <experiments>3</experiments>
</comment>
<comment type="interaction">
    <interactant intactId="EBI-3866665">
        <id>O43609</id>
    </interactant>
    <interactant intactId="EBI-947551">
        <id>Q9H2X0</id>
        <label>CHRD</label>
    </interactant>
    <organismsDiffer>false</organismsDiffer>
    <experiments>3</experiments>
</comment>
<comment type="interaction">
    <interactant intactId="EBI-3866665">
        <id>O43609</id>
    </interactant>
    <interactant intactId="EBI-10192698">
        <id>Q02930-3</id>
        <label>CREB5</label>
    </interactant>
    <organismsDiffer>false</organismsDiffer>
    <experiments>8</experiments>
</comment>
<comment type="interaction">
    <interactant intactId="EBI-3866665">
        <id>O43609</id>
    </interactant>
    <interactant intactId="EBI-3867333">
        <id>A8MQ03</id>
        <label>CYSRT1</label>
    </interactant>
    <organismsDiffer>false</organismsDiffer>
    <experiments>6</experiments>
</comment>
<comment type="interaction">
    <interactant intactId="EBI-3866665">
        <id>O43609</id>
    </interactant>
    <interactant intactId="EBI-2513774">
        <id>O95363</id>
        <label>FARS2</label>
    </interactant>
    <organismsDiffer>false</organismsDiffer>
    <experiments>3</experiments>
</comment>
<comment type="interaction">
    <interactant intactId="EBI-3866665">
        <id>O43609</id>
    </interactant>
    <interactant intactId="EBI-11956479">
        <id>P23142-4</id>
        <label>FBLN1</label>
    </interactant>
    <organismsDiffer>false</organismsDiffer>
    <experiments>3</experiments>
</comment>
<comment type="interaction">
    <interactant intactId="EBI-3866665">
        <id>O43609</id>
    </interactant>
    <interactant intactId="EBI-750641">
        <id>Q5TD97</id>
        <label>FHL5</label>
    </interactant>
    <organismsDiffer>false</organismsDiffer>
    <experiments>5</experiments>
</comment>
<comment type="interaction">
    <interactant intactId="EBI-3866665">
        <id>O43609</id>
    </interactant>
    <interactant intactId="EBI-356700">
        <id>P57678</id>
        <label>GEMIN4</label>
    </interactant>
    <organismsDiffer>false</organismsDiffer>
    <experiments>4</experiments>
</comment>
<comment type="interaction">
    <interactant intactId="EBI-3866665">
        <id>O43609</id>
    </interactant>
    <interactant intactId="EBI-11975289">
        <id>Q9Y223-2</id>
        <label>GNE</label>
    </interactant>
    <organismsDiffer>false</organismsDiffer>
    <experiments>3</experiments>
</comment>
<comment type="interaction">
    <interactant intactId="EBI-3866665">
        <id>O43609</id>
    </interactant>
    <interactant intactId="EBI-11978177">
        <id>Q96NT3-2</id>
        <label>GUCD1</label>
    </interactant>
    <organismsDiffer>false</organismsDiffer>
    <experiments>3</experiments>
</comment>
<comment type="interaction">
    <interactant intactId="EBI-3866665">
        <id>O43609</id>
    </interactant>
    <interactant intactId="EBI-5460660">
        <id>Q96MH2</id>
        <label>HEXIM2</label>
    </interactant>
    <organismsDiffer>false</organismsDiffer>
    <experiments>3</experiments>
</comment>
<comment type="interaction">
    <interactant intactId="EBI-3866665">
        <id>O43609</id>
    </interactant>
    <interactant intactId="EBI-740785">
        <id>P49639</id>
        <label>HOXA1</label>
    </interactant>
    <organismsDiffer>false</organismsDiffer>
    <experiments>8</experiments>
</comment>
<comment type="interaction">
    <interactant intactId="EBI-3866665">
        <id>O43609</id>
    </interactant>
    <interactant intactId="EBI-7116203">
        <id>O75031</id>
        <label>HSF2BP</label>
    </interactant>
    <organismsDiffer>false</organismsDiffer>
    <experiments>3</experiments>
</comment>
<comment type="interaction">
    <interactant intactId="EBI-3866665">
        <id>O43609</id>
    </interactant>
    <interactant intactId="EBI-6509505">
        <id>Q0VD86</id>
        <label>INCA1</label>
    </interactant>
    <organismsDiffer>false</organismsDiffer>
    <experiments>3</experiments>
</comment>
<comment type="interaction">
    <interactant intactId="EBI-3866665">
        <id>O43609</id>
    </interactant>
    <interactant intactId="EBI-10981970">
        <id>Q5T749</id>
        <label>KPRP</label>
    </interactant>
    <organismsDiffer>false</organismsDiffer>
    <experiments>3</experiments>
</comment>
<comment type="interaction">
    <interactant intactId="EBI-3866665">
        <id>O43609</id>
    </interactant>
    <interactant intactId="EBI-948001">
        <id>Q15323</id>
        <label>KRT31</label>
    </interactant>
    <organismsDiffer>false</organismsDiffer>
    <experiments>3</experiments>
</comment>
<comment type="interaction">
    <interactant intactId="EBI-3866665">
        <id>O43609</id>
    </interactant>
    <interactant intactId="EBI-11959885">
        <id>Q07627</id>
        <label>KRTAP1-1</label>
    </interactant>
    <organismsDiffer>false</organismsDiffer>
    <experiments>3</experiments>
</comment>
<comment type="interaction">
    <interactant intactId="EBI-3866665">
        <id>O43609</id>
    </interactant>
    <interactant intactId="EBI-11749135">
        <id>Q8IUG1</id>
        <label>KRTAP1-3</label>
    </interactant>
    <organismsDiffer>false</organismsDiffer>
    <experiments>3</experiments>
</comment>
<comment type="interaction">
    <interactant intactId="EBI-3866665">
        <id>O43609</id>
    </interactant>
    <interactant intactId="EBI-10217483">
        <id>P60412</id>
        <label>KRTAP10-11</label>
    </interactant>
    <organismsDiffer>false</organismsDiffer>
    <experiments>3</experiments>
</comment>
<comment type="interaction">
    <interactant intactId="EBI-3866665">
        <id>O43609</id>
    </interactant>
    <interactant intactId="EBI-10172150">
        <id>P60370</id>
        <label>KRTAP10-5</label>
    </interactant>
    <organismsDiffer>false</organismsDiffer>
    <experiments>3</experiments>
</comment>
<comment type="interaction">
    <interactant intactId="EBI-3866665">
        <id>O43609</id>
    </interactant>
    <interactant intactId="EBI-10172290">
        <id>P60409</id>
        <label>KRTAP10-7</label>
    </interactant>
    <organismsDiffer>false</organismsDiffer>
    <experiments>6</experiments>
</comment>
<comment type="interaction">
    <interactant intactId="EBI-3866665">
        <id>O43609</id>
    </interactant>
    <interactant intactId="EBI-10171774">
        <id>P60410</id>
        <label>KRTAP10-8</label>
    </interactant>
    <organismsDiffer>false</organismsDiffer>
    <experiments>6</experiments>
</comment>
<comment type="interaction">
    <interactant intactId="EBI-3866665">
        <id>O43609</id>
    </interactant>
    <interactant intactId="EBI-10172052">
        <id>P60411</id>
        <label>KRTAP10-9</label>
    </interactant>
    <organismsDiffer>false</organismsDiffer>
    <experiments>6</experiments>
</comment>
<comment type="interaction">
    <interactant intactId="EBI-3866665">
        <id>O43609</id>
    </interactant>
    <interactant intactId="EBI-1052037">
        <id>Q8IUC1</id>
        <label>KRTAP11-1</label>
    </interactant>
    <organismsDiffer>false</organismsDiffer>
    <experiments>3</experiments>
</comment>
<comment type="interaction">
    <interactant intactId="EBI-3866665">
        <id>O43609</id>
    </interactant>
    <interactant intactId="EBI-10176379">
        <id>P59991</id>
        <label>KRTAP12-2</label>
    </interactant>
    <organismsDiffer>false</organismsDiffer>
    <experiments>3</experiments>
</comment>
<comment type="interaction">
    <interactant intactId="EBI-3866665">
        <id>O43609</id>
    </interactant>
    <interactant intactId="EBI-11953334">
        <id>P60328</id>
        <label>KRTAP12-3</label>
    </interactant>
    <organismsDiffer>false</organismsDiffer>
    <experiments>3</experiments>
</comment>
<comment type="interaction">
    <interactant intactId="EBI-3866665">
        <id>O43609</id>
    </interactant>
    <interactant intactId="EBI-751260">
        <id>Q9BYR7</id>
        <label>KRTAP3-2</label>
    </interactant>
    <organismsDiffer>false</organismsDiffer>
    <experiments>3</experiments>
</comment>
<comment type="interaction">
    <interactant intactId="EBI-3866665">
        <id>O43609</id>
    </interactant>
    <interactant intactId="EBI-739863">
        <id>Q9BQ66</id>
        <label>KRTAP4-12</label>
    </interactant>
    <organismsDiffer>false</organismsDiffer>
    <experiments>3</experiments>
</comment>
<comment type="interaction">
    <interactant intactId="EBI-3866665">
        <id>O43609</id>
    </interactant>
    <interactant intactId="EBI-10172511">
        <id>Q9BYR5</id>
        <label>KRTAP4-2</label>
    </interactant>
    <organismsDiffer>false</organismsDiffer>
    <experiments>3</experiments>
</comment>
<comment type="interaction">
    <interactant intactId="EBI-3866665">
        <id>O43609</id>
    </interactant>
    <interactant intactId="EBI-3958099">
        <id>P26371</id>
        <label>KRTAP5-9</label>
    </interactant>
    <organismsDiffer>false</organismsDiffer>
    <experiments>3</experiments>
</comment>
<comment type="interaction">
    <interactant intactId="EBI-3866665">
        <id>O43609</id>
    </interactant>
    <interactant intactId="EBI-1044640">
        <id>Q9BYQ4</id>
        <label>KRTAP9-2</label>
    </interactant>
    <organismsDiffer>false</organismsDiffer>
    <experiments>3</experiments>
</comment>
<comment type="interaction">
    <interactant intactId="EBI-3866665">
        <id>O43609</id>
    </interactant>
    <interactant intactId="EBI-1043191">
        <id>Q9BYQ3</id>
        <label>KRTAP9-3</label>
    </interactant>
    <organismsDiffer>false</organismsDiffer>
    <experiments>3</experiments>
</comment>
<comment type="interaction">
    <interactant intactId="EBI-3866665">
        <id>O43609</id>
    </interactant>
    <interactant intactId="EBI-11962058">
        <id>Q5T7P2</id>
        <label>LCE1A</label>
    </interactant>
    <organismsDiffer>false</organismsDiffer>
    <experiments>3</experiments>
</comment>
<comment type="interaction">
    <interactant intactId="EBI-3866665">
        <id>O43609</id>
    </interactant>
    <interactant intactId="EBI-10245913">
        <id>Q5T7P3</id>
        <label>LCE1B</label>
    </interactant>
    <organismsDiffer>false</organismsDiffer>
    <experiments>3</experiments>
</comment>
<comment type="interaction">
    <interactant intactId="EBI-3866665">
        <id>O43609</id>
    </interactant>
    <interactant intactId="EBI-12224199">
        <id>Q5T751</id>
        <label>LCE1C</label>
    </interactant>
    <organismsDiffer>false</organismsDiffer>
    <experiments>3</experiments>
</comment>
<comment type="interaction">
    <interactant intactId="EBI-3866665">
        <id>O43609</id>
    </interactant>
    <interactant intactId="EBI-11741311">
        <id>Q5T752</id>
        <label>LCE1D</label>
    </interactant>
    <organismsDiffer>false</organismsDiffer>
    <experiments>3</experiments>
</comment>
<comment type="interaction">
    <interactant intactId="EBI-3866665">
        <id>O43609</id>
    </interactant>
    <interactant intactId="EBI-11958008">
        <id>Q5T754</id>
        <label>LCE1F</label>
    </interactant>
    <organismsDiffer>false</organismsDiffer>
    <experiments>3</experiments>
</comment>
<comment type="interaction">
    <interactant intactId="EBI-3866665">
        <id>O43609</id>
    </interactant>
    <interactant intactId="EBI-10246607">
        <id>Q5TA79</id>
        <label>LCE2A</label>
    </interactant>
    <organismsDiffer>false</organismsDiffer>
    <experiments>3</experiments>
</comment>
<comment type="interaction">
    <interactant intactId="EBI-3866665">
        <id>O43609</id>
    </interactant>
    <interactant intactId="EBI-11973993">
        <id>Q5TA81</id>
        <label>LCE2C</label>
    </interactant>
    <organismsDiffer>false</organismsDiffer>
    <experiments>3</experiments>
</comment>
<comment type="interaction">
    <interactant intactId="EBI-3866665">
        <id>O43609</id>
    </interactant>
    <interactant intactId="EBI-10246750">
        <id>Q5TA82</id>
        <label>LCE2D</label>
    </interactant>
    <organismsDiffer>false</organismsDiffer>
    <experiments>7</experiments>
</comment>
<comment type="interaction">
    <interactant intactId="EBI-3866665">
        <id>O43609</id>
    </interactant>
    <interactant intactId="EBI-9394625">
        <id>Q5TA76</id>
        <label>LCE3A</label>
    </interactant>
    <organismsDiffer>false</organismsDiffer>
    <experiments>6</experiments>
</comment>
<comment type="interaction">
    <interactant intactId="EBI-3866665">
        <id>O43609</id>
    </interactant>
    <interactant intactId="EBI-10245291">
        <id>Q5T5A8</id>
        <label>LCE3C</label>
    </interactant>
    <organismsDiffer>false</organismsDiffer>
    <experiments>3</experiments>
</comment>
<comment type="interaction">
    <interactant intactId="EBI-3866665">
        <id>O43609</id>
    </interactant>
    <interactant intactId="EBI-6658837">
        <id>Q9BYE3</id>
        <label>LCE3D</label>
    </interactant>
    <organismsDiffer>false</organismsDiffer>
    <experiments>4</experiments>
</comment>
<comment type="interaction">
    <interactant intactId="EBI-3866665">
        <id>O43609</id>
    </interactant>
    <interactant intactId="EBI-10246358">
        <id>Q5TA78</id>
        <label>LCE4A</label>
    </interactant>
    <organismsDiffer>false</organismsDiffer>
    <experiments>3</experiments>
</comment>
<comment type="interaction">
    <interactant intactId="EBI-3866665">
        <id>O43609</id>
    </interactant>
    <interactant intactId="EBI-11955689">
        <id>Q5TCM9</id>
        <label>LCE5A</label>
    </interactant>
    <organismsDiffer>false</organismsDiffer>
    <experiments>3</experiments>
</comment>
<comment type="interaction">
    <interactant intactId="EBI-3866665">
        <id>O43609</id>
    </interactant>
    <interactant intactId="EBI-11323212">
        <id>Q8IYB1</id>
        <label>MB21D2</label>
    </interactant>
    <organismsDiffer>false</organismsDiffer>
    <experiments>3</experiments>
</comment>
<comment type="interaction">
    <interactant intactId="EBI-3866665">
        <id>O43609</id>
    </interactant>
    <interactant intactId="EBI-724076">
        <id>Q99750</id>
        <label>MDFI</label>
    </interactant>
    <organismsDiffer>false</organismsDiffer>
    <experiments>7</experiments>
</comment>
<comment type="interaction">
    <interactant intactId="EBI-3866665">
        <id>O43609</id>
    </interactant>
    <interactant intactId="EBI-748397">
        <id>P50222</id>
        <label>MEOX2</label>
    </interactant>
    <organismsDiffer>false</organismsDiffer>
    <experiments>4</experiments>
</comment>
<comment type="interaction">
    <interactant intactId="EBI-3866665">
        <id>O43609</id>
    </interactant>
    <interactant intactId="EBI-16439278">
        <id>Q6FHY5</id>
        <label>MEOX2</label>
    </interactant>
    <organismsDiffer>false</organismsDiffer>
    <experiments>3</experiments>
</comment>
<comment type="interaction">
    <interactant intactId="EBI-3866665">
        <id>O43609</id>
    </interactant>
    <interactant intactId="EBI-945833">
        <id>Q7Z3S9</id>
        <label>NOTCH2NLA</label>
    </interactant>
    <organismsDiffer>false</organismsDiffer>
    <experiments>5</experiments>
</comment>
<comment type="interaction">
    <interactant intactId="EBI-3866665">
        <id>O43609</id>
    </interactant>
    <interactant intactId="EBI-22310682">
        <id>P0DPK4</id>
        <label>NOTCH2NLC</label>
    </interactant>
    <organismsDiffer>false</organismsDiffer>
    <experiments>3</experiments>
</comment>
<comment type="interaction">
    <interactant intactId="EBI-3866665">
        <id>O43609</id>
    </interactant>
    <interactant intactId="EBI-12027160">
        <id>Q9P121-3</id>
        <label>NTM</label>
    </interactant>
    <organismsDiffer>false</organismsDiffer>
    <experiments>3</experiments>
</comment>
<comment type="interaction">
    <interactant intactId="EBI-3866665">
        <id>O43609</id>
    </interactant>
    <interactant intactId="EBI-740446">
        <id>P32242</id>
        <label>OTX1</label>
    </interactant>
    <organismsDiffer>false</organismsDiffer>
    <experiments>4</experiments>
</comment>
<comment type="interaction">
    <interactant intactId="EBI-3866665">
        <id>O43609</id>
    </interactant>
    <interactant intactId="EBI-11956269">
        <id>Q92824-2</id>
        <label>PCSK5</label>
    </interactant>
    <organismsDiffer>false</organismsDiffer>
    <experiments>3</experiments>
</comment>
<comment type="interaction">
    <interactant intactId="EBI-3866665">
        <id>O43609</id>
    </interactant>
    <interactant intactId="EBI-1055079">
        <id>O15160</id>
        <label>POLR1C</label>
    </interactant>
    <organismsDiffer>false</organismsDiffer>
    <experiments>3</experiments>
</comment>
<comment type="interaction">
    <interactant intactId="EBI-3866665">
        <id>O43609</id>
    </interactant>
    <interactant intactId="EBI-1383852">
        <id>P54646</id>
        <label>PRKAA2</label>
    </interactant>
    <organismsDiffer>false</organismsDiffer>
    <experiments>3</experiments>
</comment>
<comment type="interaction">
    <interactant intactId="EBI-3866665">
        <id>O43609</id>
    </interactant>
    <interactant intactId="EBI-1053424">
        <id>O43741</id>
        <label>PRKAB2</label>
    </interactant>
    <organismsDiffer>false</organismsDiffer>
    <experiments>3</experiments>
</comment>
<comment type="interaction">
    <interactant intactId="EBI-3866665">
        <id>O43609</id>
    </interactant>
    <interactant intactId="EBI-10326419">
        <id>Q9Y2K5-2</id>
        <label>R3HDM2</label>
    </interactant>
    <organismsDiffer>false</organismsDiffer>
    <experiments>3</experiments>
</comment>
<comment type="interaction">
    <interactant intactId="EBI-3866665">
        <id>O43609</id>
    </interactant>
    <interactant intactId="EBI-10829018">
        <id>Q04864-2</id>
        <label>REL</label>
    </interactant>
    <organismsDiffer>false</organismsDiffer>
    <experiments>3</experiments>
</comment>
<comment type="interaction">
    <interactant intactId="EBI-3866665">
        <id>O43609</id>
    </interactant>
    <interactant intactId="EBI-750494">
        <id>P49901</id>
        <label>SMCP</label>
    </interactant>
    <organismsDiffer>false</organismsDiffer>
    <experiments>3</experiments>
</comment>
<comment type="interaction">
    <interactant intactId="EBI-3866665">
        <id>O43609</id>
    </interactant>
    <interactant intactId="EBI-742487">
        <id>O43597</id>
        <label>SPRY2</label>
    </interactant>
    <organismsDiffer>false</organismsDiffer>
    <experiments>3</experiments>
</comment>
<comment type="interaction">
    <interactant intactId="EBI-3866665">
        <id>O43609</id>
    </interactant>
    <interactant intactId="EBI-11952651">
        <id>Q7Z6R9</id>
        <label>TFAP2D</label>
    </interactant>
    <organismsDiffer>false</organismsDiffer>
    <experiments>3</experiments>
</comment>
<comment type="interaction">
    <interactant intactId="EBI-3866665">
        <id>O43609</id>
    </interactant>
    <interactant intactId="EBI-12029034">
        <id>Q96PF1</id>
        <label>TGM7</label>
    </interactant>
    <organismsDiffer>false</organismsDiffer>
    <experiments>3</experiments>
</comment>
<comment type="interaction">
    <interactant intactId="EBI-3866665">
        <id>O43609</id>
    </interactant>
    <interactant intactId="EBI-7353612">
        <id>P57075-2</id>
        <label>UBASH3A</label>
    </interactant>
    <organismsDiffer>false</organismsDiffer>
    <experiments>3</experiments>
</comment>
<comment type="interaction">
    <interactant intactId="EBI-3866665">
        <id>O43609</id>
    </interactant>
    <interactant intactId="EBI-11957238">
        <id>Q2TAL6</id>
        <label>VWC2</label>
    </interactant>
    <organismsDiffer>false</organismsDiffer>
    <experiments>3</experiments>
</comment>
<comment type="interaction">
    <interactant intactId="EBI-3866665">
        <id>O43609</id>
    </interactant>
    <interactant intactId="EBI-5657766">
        <id>P17027</id>
        <label>ZNF23</label>
    </interactant>
    <organismsDiffer>false</organismsDiffer>
    <experiments>4</experiments>
</comment>
<comment type="interaction">
    <interactant intactId="EBI-3866665">
        <id>O43609</id>
    </interactant>
    <interactant intactId="EBI-373456">
        <id>Q9Y3S2</id>
        <label>ZNF330</label>
    </interactant>
    <organismsDiffer>false</organismsDiffer>
    <experiments>3</experiments>
</comment>
<comment type="interaction">
    <interactant intactId="EBI-3866665">
        <id>O43609</id>
    </interactant>
    <interactant intactId="EBI-740727">
        <id>Q8TAU3</id>
        <label>ZNF417</label>
    </interactant>
    <organismsDiffer>false</organismsDiffer>
    <experiments>3</experiments>
</comment>
<comment type="interaction">
    <interactant intactId="EBI-3866665">
        <id>O43609</id>
    </interactant>
    <interactant intactId="EBI-17216366">
        <id>Q8N8Z8</id>
        <label>ZNF441</label>
    </interactant>
    <organismsDiffer>false</organismsDiffer>
    <experiments>3</experiments>
</comment>
<comment type="interaction">
    <interactant intactId="EBI-3866665">
        <id>O43609</id>
    </interactant>
    <interactant intactId="EBI-11962574">
        <id>Q96EG3</id>
        <label>ZNF837</label>
    </interactant>
    <organismsDiffer>false</organismsDiffer>
    <experiments>3</experiments>
</comment>
<comment type="interaction">
    <interactant intactId="EBI-3866665">
        <id>O43609</id>
    </interactant>
    <interactant intactId="EBI-3957603">
        <id>P09022</id>
        <label>Hoxa1</label>
    </interactant>
    <organismsDiffer>true</organismsDiffer>
    <experiments>3</experiments>
</comment>
<comment type="subcellular location">
    <subcellularLocation>
        <location>Cytoplasm</location>
    </subcellularLocation>
    <subcellularLocation>
        <location>Membrane</location>
        <topology>Peripheral membrane protein</topology>
    </subcellularLocation>
    <text>Found in the cytoplasm in unstimulated cells but is translocated to the membrane ruffles in cells stimulated with EGF (epidermal growth factor).</text>
</comment>
<comment type="domain">
    <text>The Cys-rich domain is responsible for the localization of the protein to the membrane ruffles.</text>
</comment>
<comment type="similarity">
    <text evidence="4">Belongs to the sprouty family.</text>
</comment>
<keyword id="KW-0007">Acetylation</keyword>
<keyword id="KW-0963">Cytoplasm</keyword>
<keyword id="KW-0217">Developmental protein</keyword>
<keyword id="KW-0472">Membrane</keyword>
<keyword id="KW-1267">Proteomics identification</keyword>
<keyword id="KW-1185">Reference proteome</keyword>
<feature type="chain" id="PRO_0000076898" description="Protein sprouty homolog 1">
    <location>
        <begin position="1"/>
        <end position="319"/>
    </location>
</feature>
<feature type="domain" description="SPR" evidence="2">
    <location>
        <begin position="183"/>
        <end position="295"/>
    </location>
</feature>
<feature type="region of interest" description="Disordered" evidence="3">
    <location>
        <begin position="54"/>
        <end position="78"/>
    </location>
</feature>
<feature type="region of interest" description="Disordered" evidence="3">
    <location>
        <begin position="100"/>
        <end position="160"/>
    </location>
</feature>
<feature type="compositionally biased region" description="Basic and acidic residues" evidence="3">
    <location>
        <begin position="69"/>
        <end position="78"/>
    </location>
</feature>
<feature type="compositionally biased region" description="Low complexity" evidence="3">
    <location>
        <begin position="112"/>
        <end position="131"/>
    </location>
</feature>
<feature type="modified residue" description="N-acetylmethionine" evidence="5">
    <location>
        <position position="1"/>
    </location>
</feature>
<proteinExistence type="evidence at protein level"/>
<sequence>MDPQNQHGSGSSLVVIQQPSLDSRQRLDYEREIQPTAILSLDQIKAIRGSNEYTEGPSVVKRPAPRTAPRQEKHERTHEIIPINVNNNYEHRHTSHLGHAVLPSNARGPILSRSTSTGSAASSGSNSSASSEQGLLGRSPPTRPVPGHRSERAIRTQPKQLIVDDLKGSLKEDLTQHKFICEQCGKCKCGECTAPRTLPSCLACNRQCLCSAESMVEYGTCMCLVKGIFYHCSNDDEGDSYSDNPCSCSQSHCCSRYLCMGAMSLFLPCLLCYPPAKGCLKLCRRCYDWIHRPGCRCKNSNTVYCKLESCPSRGQGKPS</sequence>
<dbReference type="EMBL" id="AY192146">
    <property type="protein sequence ID" value="AAP20102.1"/>
    <property type="molecule type" value="mRNA"/>
</dbReference>
<dbReference type="EMBL" id="CH471056">
    <property type="protein sequence ID" value="EAX05209.1"/>
    <property type="molecule type" value="Genomic_DNA"/>
</dbReference>
<dbReference type="EMBL" id="CH471056">
    <property type="protein sequence ID" value="EAX05210.1"/>
    <property type="molecule type" value="Genomic_DNA"/>
</dbReference>
<dbReference type="EMBL" id="CH471056">
    <property type="protein sequence ID" value="EAX05211.1"/>
    <property type="molecule type" value="Genomic_DNA"/>
</dbReference>
<dbReference type="EMBL" id="BC063856">
    <property type="protein sequence ID" value="AAH63856.1"/>
    <property type="molecule type" value="mRNA"/>
</dbReference>
<dbReference type="EMBL" id="AY590694">
    <property type="protein sequence ID" value="AAT06102.1"/>
    <property type="molecule type" value="mRNA"/>
</dbReference>
<dbReference type="EMBL" id="AF041037">
    <property type="protein sequence ID" value="AAC39566.1"/>
    <property type="molecule type" value="mRNA"/>
</dbReference>
<dbReference type="CCDS" id="CCDS3731.1"/>
<dbReference type="RefSeq" id="NP_001244967.1">
    <property type="nucleotide sequence ID" value="NM_001258038.2"/>
</dbReference>
<dbReference type="RefSeq" id="NP_001244968.1">
    <property type="nucleotide sequence ID" value="NM_001258039.1"/>
</dbReference>
<dbReference type="RefSeq" id="NP_001362339.1">
    <property type="nucleotide sequence ID" value="NM_001375410.1"/>
</dbReference>
<dbReference type="RefSeq" id="NP_005832.1">
    <property type="nucleotide sequence ID" value="NM_005841.3"/>
</dbReference>
<dbReference type="RefSeq" id="NP_955359.1">
    <property type="nucleotide sequence ID" value="NM_199327.3"/>
</dbReference>
<dbReference type="RefSeq" id="XP_005262743.1">
    <property type="nucleotide sequence ID" value="XM_005262686.1"/>
</dbReference>
<dbReference type="RefSeq" id="XP_016863124.1">
    <property type="nucleotide sequence ID" value="XM_017007635.1"/>
</dbReference>
<dbReference type="RefSeq" id="XP_047305448.1">
    <property type="nucleotide sequence ID" value="XM_047449492.1"/>
</dbReference>
<dbReference type="RefSeq" id="XP_054204695.1">
    <property type="nucleotide sequence ID" value="XM_054348720.1"/>
</dbReference>
<dbReference type="SMR" id="O43609"/>
<dbReference type="BioGRID" id="115546">
    <property type="interactions" value="115"/>
</dbReference>
<dbReference type="FunCoup" id="O43609">
    <property type="interactions" value="1206"/>
</dbReference>
<dbReference type="IntAct" id="O43609">
    <property type="interactions" value="90"/>
</dbReference>
<dbReference type="MINT" id="O43609"/>
<dbReference type="STRING" id="9606.ENSP00000481675"/>
<dbReference type="iPTMnet" id="O43609"/>
<dbReference type="PhosphoSitePlus" id="O43609"/>
<dbReference type="SwissPalm" id="O43609"/>
<dbReference type="BioMuta" id="SPRY1"/>
<dbReference type="jPOST" id="O43609"/>
<dbReference type="MassIVE" id="O43609"/>
<dbReference type="PaxDb" id="9606-ENSP00000481675"/>
<dbReference type="PeptideAtlas" id="O43609"/>
<dbReference type="ProteomicsDB" id="49078"/>
<dbReference type="Pumba" id="O43609"/>
<dbReference type="Antibodypedia" id="26880">
    <property type="antibodies" value="271 antibodies from 30 providers"/>
</dbReference>
<dbReference type="DNASU" id="10252"/>
<dbReference type="Ensembl" id="ENST00000339241.1">
    <property type="protein sequence ID" value="ENSP00000343785.1"/>
    <property type="gene ID" value="ENSG00000164056.11"/>
</dbReference>
<dbReference type="Ensembl" id="ENST00000394339.2">
    <property type="protein sequence ID" value="ENSP00000377871.2"/>
    <property type="gene ID" value="ENSG00000164056.11"/>
</dbReference>
<dbReference type="Ensembl" id="ENST00000610581.4">
    <property type="protein sequence ID" value="ENSP00000481675.1"/>
    <property type="gene ID" value="ENSG00000164056.11"/>
</dbReference>
<dbReference type="Ensembl" id="ENST00000622283.1">
    <property type="protein sequence ID" value="ENSP00000480540.1"/>
    <property type="gene ID" value="ENSG00000164056.11"/>
</dbReference>
<dbReference type="Ensembl" id="ENST00000651917.1">
    <property type="protein sequence ID" value="ENSP00000498292.1"/>
    <property type="gene ID" value="ENSG00000164056.11"/>
</dbReference>
<dbReference type="GeneID" id="10252"/>
<dbReference type="KEGG" id="hsa:10252"/>
<dbReference type="MANE-Select" id="ENST00000651917.1">
    <property type="protein sequence ID" value="ENSP00000498292.1"/>
    <property type="RefSeq nucleotide sequence ID" value="NM_001258038.2"/>
    <property type="RefSeq protein sequence ID" value="NP_001244967.1"/>
</dbReference>
<dbReference type="UCSC" id="uc003ifa.5">
    <property type="organism name" value="human"/>
</dbReference>
<dbReference type="AGR" id="HGNC:11269"/>
<dbReference type="CTD" id="10252"/>
<dbReference type="DisGeNET" id="10252"/>
<dbReference type="GeneCards" id="SPRY1"/>
<dbReference type="HGNC" id="HGNC:11269">
    <property type="gene designation" value="SPRY1"/>
</dbReference>
<dbReference type="HPA" id="ENSG00000164056">
    <property type="expression patterns" value="Tissue enhanced (adipose)"/>
</dbReference>
<dbReference type="MalaCards" id="SPRY1"/>
<dbReference type="MIM" id="602465">
    <property type="type" value="gene"/>
</dbReference>
<dbReference type="neXtProt" id="NX_O43609"/>
<dbReference type="OpenTargets" id="ENSG00000164056"/>
<dbReference type="PharmGKB" id="PA36098"/>
<dbReference type="VEuPathDB" id="HostDB:ENSG00000164056"/>
<dbReference type="eggNOG" id="ENOG502QSDN">
    <property type="taxonomic scope" value="Eukaryota"/>
</dbReference>
<dbReference type="GeneTree" id="ENSGT00950000183055"/>
<dbReference type="HOGENOM" id="CLU_077696_0_0_1"/>
<dbReference type="InParanoid" id="O43609"/>
<dbReference type="OMA" id="YERESQP"/>
<dbReference type="OrthoDB" id="10038884at2759"/>
<dbReference type="PAN-GO" id="O43609">
    <property type="GO annotations" value="5 GO annotations based on evolutionary models"/>
</dbReference>
<dbReference type="PhylomeDB" id="O43609"/>
<dbReference type="TreeFam" id="TF325070"/>
<dbReference type="PathwayCommons" id="O43609"/>
<dbReference type="Reactome" id="R-HSA-182971">
    <property type="pathway name" value="EGFR downregulation"/>
</dbReference>
<dbReference type="SignaLink" id="O43609"/>
<dbReference type="SIGNOR" id="O43609"/>
<dbReference type="BioGRID-ORCS" id="10252">
    <property type="hits" value="11 hits in 1148 CRISPR screens"/>
</dbReference>
<dbReference type="ChiTaRS" id="SPRY1">
    <property type="organism name" value="human"/>
</dbReference>
<dbReference type="GeneWiki" id="SPRY1"/>
<dbReference type="GenomeRNAi" id="10252"/>
<dbReference type="Pharos" id="O43609">
    <property type="development level" value="Tbio"/>
</dbReference>
<dbReference type="PRO" id="PR:O43609"/>
<dbReference type="Proteomes" id="UP000005640">
    <property type="component" value="Chromosome 4"/>
</dbReference>
<dbReference type="RNAct" id="O43609">
    <property type="molecule type" value="protein"/>
</dbReference>
<dbReference type="Bgee" id="ENSG00000164056">
    <property type="expression patterns" value="Expressed in pericardium and 190 other cell types or tissues"/>
</dbReference>
<dbReference type="ExpressionAtlas" id="O43609">
    <property type="expression patterns" value="baseline and differential"/>
</dbReference>
<dbReference type="GO" id="GO:0005829">
    <property type="term" value="C:cytosol"/>
    <property type="evidence" value="ECO:0000314"/>
    <property type="project" value="HPA"/>
</dbReference>
<dbReference type="GO" id="GO:0005794">
    <property type="term" value="C:Golgi apparatus"/>
    <property type="evidence" value="ECO:0000314"/>
    <property type="project" value="HPA"/>
</dbReference>
<dbReference type="GO" id="GO:0005654">
    <property type="term" value="C:nucleoplasm"/>
    <property type="evidence" value="ECO:0000314"/>
    <property type="project" value="HPA"/>
</dbReference>
<dbReference type="GO" id="GO:0005886">
    <property type="term" value="C:plasma membrane"/>
    <property type="evidence" value="ECO:0000304"/>
    <property type="project" value="Reactome"/>
</dbReference>
<dbReference type="GO" id="GO:0048513">
    <property type="term" value="P:animal organ development"/>
    <property type="evidence" value="ECO:0000318"/>
    <property type="project" value="GO_Central"/>
</dbReference>
<dbReference type="GO" id="GO:0060449">
    <property type="term" value="P:bud elongation involved in lung branching"/>
    <property type="evidence" value="ECO:0007669"/>
    <property type="project" value="Ensembl"/>
</dbReference>
<dbReference type="GO" id="GO:0060940">
    <property type="term" value="P:epithelial to mesenchymal transition involved in cardiac fibroblast development"/>
    <property type="evidence" value="ECO:0000250"/>
    <property type="project" value="BHF-UCL"/>
</dbReference>
<dbReference type="GO" id="GO:0070371">
    <property type="term" value="P:ERK1 and ERK2 cascade"/>
    <property type="evidence" value="ECO:0007669"/>
    <property type="project" value="Ensembl"/>
</dbReference>
<dbReference type="GO" id="GO:0000132">
    <property type="term" value="P:establishment of mitotic spindle orientation"/>
    <property type="evidence" value="ECO:0007669"/>
    <property type="project" value="Ensembl"/>
</dbReference>
<dbReference type="GO" id="GO:0001656">
    <property type="term" value="P:metanephros development"/>
    <property type="evidence" value="ECO:0007669"/>
    <property type="project" value="Ensembl"/>
</dbReference>
<dbReference type="GO" id="GO:0008285">
    <property type="term" value="P:negative regulation of cell population proliferation"/>
    <property type="evidence" value="ECO:0007669"/>
    <property type="project" value="Ensembl"/>
</dbReference>
<dbReference type="GO" id="GO:0010719">
    <property type="term" value="P:negative regulation of epithelial to mesenchymal transition"/>
    <property type="evidence" value="ECO:0000250"/>
    <property type="project" value="UniProtKB"/>
</dbReference>
<dbReference type="GO" id="GO:0070373">
    <property type="term" value="P:negative regulation of ERK1 and ERK2 cascade"/>
    <property type="evidence" value="ECO:0000250"/>
    <property type="project" value="UniProtKB"/>
</dbReference>
<dbReference type="GO" id="GO:0040037">
    <property type="term" value="P:negative regulation of fibroblast growth factor receptor signaling pathway"/>
    <property type="evidence" value="ECO:0000315"/>
    <property type="project" value="FlyBase"/>
</dbReference>
<dbReference type="GO" id="GO:1902747">
    <property type="term" value="P:negative regulation of lens fiber cell differentiation"/>
    <property type="evidence" value="ECO:0000250"/>
    <property type="project" value="UniProtKB"/>
</dbReference>
<dbReference type="GO" id="GO:0051387">
    <property type="term" value="P:negative regulation of neurotrophin TRK receptor signaling pathway"/>
    <property type="evidence" value="ECO:0007669"/>
    <property type="project" value="Ensembl"/>
</dbReference>
<dbReference type="GO" id="GO:0046580">
    <property type="term" value="P:negative regulation of Ras protein signal transduction"/>
    <property type="evidence" value="ECO:0000318"/>
    <property type="project" value="GO_Central"/>
</dbReference>
<dbReference type="GO" id="GO:0030512">
    <property type="term" value="P:negative regulation of transforming growth factor beta receptor signaling pathway"/>
    <property type="evidence" value="ECO:0000250"/>
    <property type="project" value="UniProtKB"/>
</dbReference>
<dbReference type="GO" id="GO:0001759">
    <property type="term" value="P:organ induction"/>
    <property type="evidence" value="ECO:0007669"/>
    <property type="project" value="Ensembl"/>
</dbReference>
<dbReference type="GO" id="GO:0001657">
    <property type="term" value="P:ureteric bud development"/>
    <property type="evidence" value="ECO:0007669"/>
    <property type="project" value="Ensembl"/>
</dbReference>
<dbReference type="InterPro" id="IPR007875">
    <property type="entry name" value="Sprouty"/>
</dbReference>
<dbReference type="InterPro" id="IPR051192">
    <property type="entry name" value="Sprouty_domain"/>
</dbReference>
<dbReference type="PANTHER" id="PTHR12365:SF10">
    <property type="entry name" value="PROTEIN SPROUTY HOMOLOG 1"/>
    <property type="match status" value="1"/>
</dbReference>
<dbReference type="PANTHER" id="PTHR12365">
    <property type="entry name" value="SPROUTY"/>
    <property type="match status" value="1"/>
</dbReference>
<dbReference type="Pfam" id="PF05210">
    <property type="entry name" value="Sprouty"/>
    <property type="match status" value="1"/>
</dbReference>
<dbReference type="PROSITE" id="PS51227">
    <property type="entry name" value="SPR"/>
    <property type="match status" value="1"/>
</dbReference>
<name>SPY1_HUMAN</name>